<comment type="function">
    <text evidence="1">Catalyzes the isomerization of 5-dehydro-4-deoxy-D-glucuronate to 3-deoxy-D-glycero-2,5-hexodiulosonate.</text>
</comment>
<comment type="catalytic activity">
    <reaction>
        <text>5-dehydro-4-deoxy-D-glucuronate = 3-deoxy-D-glycero-2,5-hexodiulosonate</text>
        <dbReference type="Rhea" id="RHEA:23896"/>
        <dbReference type="ChEBI" id="CHEBI:17117"/>
        <dbReference type="ChEBI" id="CHEBI:29071"/>
        <dbReference type="EC" id="5.3.1.17"/>
    </reaction>
</comment>
<comment type="cofactor">
    <cofactor evidence="1">
        <name>Zn(2+)</name>
        <dbReference type="ChEBI" id="CHEBI:29105"/>
    </cofactor>
    <text evidence="1">Binds 1 zinc ion per subunit.</text>
</comment>
<comment type="pathway">
    <text>Glycan metabolism; pectin degradation; 2-dehydro-3-deoxy-D-gluconate from pectin: step 4/5.</text>
</comment>
<comment type="induction">
    <text evidence="2">Induced by galacturonate and negatively regulated by the KdgR repressor. Is subject to catabolite repression by glucose involving the ccpA gene.</text>
</comment>
<comment type="similarity">
    <text evidence="3">Belongs to the KduI family.</text>
</comment>
<protein>
    <recommendedName>
        <fullName>4-deoxy-L-threo-5-hexosulose-uronate ketol-isomerase</fullName>
        <ecNumber>5.3.1.17</ecNumber>
    </recommendedName>
    <alternativeName>
        <fullName>5-keto-4-deoxyuronate isomerase</fullName>
    </alternativeName>
    <alternativeName>
        <fullName>DKI isomerase</fullName>
    </alternativeName>
</protein>
<keyword id="KW-0413">Isomerase</keyword>
<keyword id="KW-0479">Metal-binding</keyword>
<keyword id="KW-1185">Reference proteome</keyword>
<keyword id="KW-0862">Zinc</keyword>
<evidence type="ECO:0000250" key="1"/>
<evidence type="ECO:0000269" key="2">
    <source>
    </source>
</evidence>
<evidence type="ECO:0000305" key="3"/>
<sequence>MENRYSVHPEQVKRFTTEELRSHFLMDSLFTENKLTMYYSHEDRVVIGGAAPGQSELKLDAGDFLKTDFFLERREIGIINVGQPGAVRVGDDEYVLQTKDFLYIGMGNQDVSFSSLNGEKAKFYFVSACAHKSYPTQKAALSELTPDRLGDDAASNVRSLYKVIHQDGIKSCQLMMGITMLDQNNNWNTMPAHVHDRRMEAYLYLDLEKDSKVFHFMGQPDETRHLVVGNEQAVLSPAWSIHSGAGTSNYSFVWAMAGENYTFTDMDLIPMDGLK</sequence>
<reference key="1">
    <citation type="journal article" date="1996" name="Microbiology">
        <title>Sequence analysis of the Bacillus subtilis chromosome region between the serA and kdg loci cloned in a yeast artificial chromosome.</title>
        <authorList>
            <person name="Sorokin A.V."/>
            <person name="Azevedo V."/>
            <person name="Zumstein E."/>
            <person name="Galleron N."/>
            <person name="Ehrlich S.D."/>
            <person name="Serror P."/>
        </authorList>
    </citation>
    <scope>NUCLEOTIDE SEQUENCE [GENOMIC DNA]</scope>
    <source>
        <strain>168 / Marburg / ATCC 6051 / DSM 10 / JCM 1465 / NBRC 13719 / NCIMB 3610 / NRRL NRS-744 / VKM B-501</strain>
    </source>
</reference>
<reference key="2">
    <citation type="journal article" date="1997" name="Nature">
        <title>The complete genome sequence of the Gram-positive bacterium Bacillus subtilis.</title>
        <authorList>
            <person name="Kunst F."/>
            <person name="Ogasawara N."/>
            <person name="Moszer I."/>
            <person name="Albertini A.M."/>
            <person name="Alloni G."/>
            <person name="Azevedo V."/>
            <person name="Bertero M.G."/>
            <person name="Bessieres P."/>
            <person name="Bolotin A."/>
            <person name="Borchert S."/>
            <person name="Borriss R."/>
            <person name="Boursier L."/>
            <person name="Brans A."/>
            <person name="Braun M."/>
            <person name="Brignell S.C."/>
            <person name="Bron S."/>
            <person name="Brouillet S."/>
            <person name="Bruschi C.V."/>
            <person name="Caldwell B."/>
            <person name="Capuano V."/>
            <person name="Carter N.M."/>
            <person name="Choi S.-K."/>
            <person name="Codani J.-J."/>
            <person name="Connerton I.F."/>
            <person name="Cummings N.J."/>
            <person name="Daniel R.A."/>
            <person name="Denizot F."/>
            <person name="Devine K.M."/>
            <person name="Duesterhoeft A."/>
            <person name="Ehrlich S.D."/>
            <person name="Emmerson P.T."/>
            <person name="Entian K.-D."/>
            <person name="Errington J."/>
            <person name="Fabret C."/>
            <person name="Ferrari E."/>
            <person name="Foulger D."/>
            <person name="Fritz C."/>
            <person name="Fujita M."/>
            <person name="Fujita Y."/>
            <person name="Fuma S."/>
            <person name="Galizzi A."/>
            <person name="Galleron N."/>
            <person name="Ghim S.-Y."/>
            <person name="Glaser P."/>
            <person name="Goffeau A."/>
            <person name="Golightly E.J."/>
            <person name="Grandi G."/>
            <person name="Guiseppi G."/>
            <person name="Guy B.J."/>
            <person name="Haga K."/>
            <person name="Haiech J."/>
            <person name="Harwood C.R."/>
            <person name="Henaut A."/>
            <person name="Hilbert H."/>
            <person name="Holsappel S."/>
            <person name="Hosono S."/>
            <person name="Hullo M.-F."/>
            <person name="Itaya M."/>
            <person name="Jones L.-M."/>
            <person name="Joris B."/>
            <person name="Karamata D."/>
            <person name="Kasahara Y."/>
            <person name="Klaerr-Blanchard M."/>
            <person name="Klein C."/>
            <person name="Kobayashi Y."/>
            <person name="Koetter P."/>
            <person name="Koningstein G."/>
            <person name="Krogh S."/>
            <person name="Kumano M."/>
            <person name="Kurita K."/>
            <person name="Lapidus A."/>
            <person name="Lardinois S."/>
            <person name="Lauber J."/>
            <person name="Lazarevic V."/>
            <person name="Lee S.-M."/>
            <person name="Levine A."/>
            <person name="Liu H."/>
            <person name="Masuda S."/>
            <person name="Mauel C."/>
            <person name="Medigue C."/>
            <person name="Medina N."/>
            <person name="Mellado R.P."/>
            <person name="Mizuno M."/>
            <person name="Moestl D."/>
            <person name="Nakai S."/>
            <person name="Noback M."/>
            <person name="Noone D."/>
            <person name="O'Reilly M."/>
            <person name="Ogawa K."/>
            <person name="Ogiwara A."/>
            <person name="Oudega B."/>
            <person name="Park S.-H."/>
            <person name="Parro V."/>
            <person name="Pohl T.M."/>
            <person name="Portetelle D."/>
            <person name="Porwollik S."/>
            <person name="Prescott A.M."/>
            <person name="Presecan E."/>
            <person name="Pujic P."/>
            <person name="Purnelle B."/>
            <person name="Rapoport G."/>
            <person name="Rey M."/>
            <person name="Reynolds S."/>
            <person name="Rieger M."/>
            <person name="Rivolta C."/>
            <person name="Rocha E."/>
            <person name="Roche B."/>
            <person name="Rose M."/>
            <person name="Sadaie Y."/>
            <person name="Sato T."/>
            <person name="Scanlan E."/>
            <person name="Schleich S."/>
            <person name="Schroeter R."/>
            <person name="Scoffone F."/>
            <person name="Sekiguchi J."/>
            <person name="Sekowska A."/>
            <person name="Seror S.J."/>
            <person name="Serror P."/>
            <person name="Shin B.-S."/>
            <person name="Soldo B."/>
            <person name="Sorokin A."/>
            <person name="Tacconi E."/>
            <person name="Takagi T."/>
            <person name="Takahashi H."/>
            <person name="Takemaru K."/>
            <person name="Takeuchi M."/>
            <person name="Tamakoshi A."/>
            <person name="Tanaka T."/>
            <person name="Terpstra P."/>
            <person name="Tognoni A."/>
            <person name="Tosato V."/>
            <person name="Uchiyama S."/>
            <person name="Vandenbol M."/>
            <person name="Vannier F."/>
            <person name="Vassarotti A."/>
            <person name="Viari A."/>
            <person name="Wambutt R."/>
            <person name="Wedler E."/>
            <person name="Wedler H."/>
            <person name="Weitzenegger T."/>
            <person name="Winters P."/>
            <person name="Wipat A."/>
            <person name="Yamamoto H."/>
            <person name="Yamane K."/>
            <person name="Yasumoto K."/>
            <person name="Yata K."/>
            <person name="Yoshida K."/>
            <person name="Yoshikawa H.-F."/>
            <person name="Zumstein E."/>
            <person name="Yoshikawa H."/>
            <person name="Danchin A."/>
        </authorList>
    </citation>
    <scope>NUCLEOTIDE SEQUENCE [LARGE SCALE GENOMIC DNA]</scope>
    <source>
        <strain>168</strain>
    </source>
</reference>
<reference key="3">
    <citation type="journal article" date="2007" name="Microbiology">
        <title>Regulation of the kduID operon of Bacillus subtilis by the KdgR repressor and the ccpA gene: identification of two KdgR-binding sites within the kdgR-kduI intergenic region.</title>
        <authorList>
            <person name="Lin J.S."/>
            <person name="Shaw G.C."/>
        </authorList>
    </citation>
    <scope>INDUCTION</scope>
    <source>
        <strain>168</strain>
    </source>
</reference>
<organism>
    <name type="scientific">Bacillus subtilis (strain 168)</name>
    <dbReference type="NCBI Taxonomy" id="224308"/>
    <lineage>
        <taxon>Bacteria</taxon>
        <taxon>Bacillati</taxon>
        <taxon>Bacillota</taxon>
        <taxon>Bacilli</taxon>
        <taxon>Bacillales</taxon>
        <taxon>Bacillaceae</taxon>
        <taxon>Bacillus</taxon>
    </lineage>
</organism>
<feature type="chain" id="PRO_0000215481" description="4-deoxy-L-threo-5-hexosulose-uronate ketol-isomerase">
    <location>
        <begin position="1"/>
        <end position="275"/>
    </location>
</feature>
<feature type="binding site" evidence="1">
    <location>
        <position position="193"/>
    </location>
    <ligand>
        <name>Zn(2+)</name>
        <dbReference type="ChEBI" id="CHEBI:29105"/>
    </ligand>
</feature>
<feature type="binding site" evidence="1">
    <location>
        <position position="195"/>
    </location>
    <ligand>
        <name>Zn(2+)</name>
        <dbReference type="ChEBI" id="CHEBI:29105"/>
    </ligand>
</feature>
<feature type="binding site" evidence="1">
    <location>
        <position position="200"/>
    </location>
    <ligand>
        <name>Zn(2+)</name>
        <dbReference type="ChEBI" id="CHEBI:29105"/>
    </ligand>
</feature>
<feature type="binding site" evidence="1">
    <location>
        <position position="242"/>
    </location>
    <ligand>
        <name>Zn(2+)</name>
        <dbReference type="ChEBI" id="CHEBI:29105"/>
    </ligand>
</feature>
<gene>
    <name type="primary">kduI</name>
    <name type="ordered locus">BSU22130</name>
</gene>
<name>KDUI_BACSU</name>
<dbReference type="EC" id="5.3.1.17"/>
<dbReference type="EMBL" id="L47838">
    <property type="protein sequence ID" value="AAB38477.1"/>
    <property type="molecule type" value="Genomic_DNA"/>
</dbReference>
<dbReference type="EMBL" id="AL009126">
    <property type="protein sequence ID" value="CAB14130.1"/>
    <property type="molecule type" value="Genomic_DNA"/>
</dbReference>
<dbReference type="PIR" id="E69648">
    <property type="entry name" value="E69648"/>
</dbReference>
<dbReference type="RefSeq" id="NP_390095.1">
    <property type="nucleotide sequence ID" value="NC_000964.3"/>
</dbReference>
<dbReference type="RefSeq" id="WP_003230722.1">
    <property type="nucleotide sequence ID" value="NZ_OZ025638.1"/>
</dbReference>
<dbReference type="SMR" id="P50843"/>
<dbReference type="FunCoup" id="P50843">
    <property type="interactions" value="30"/>
</dbReference>
<dbReference type="STRING" id="224308.BSU22130"/>
<dbReference type="PaxDb" id="224308-BSU22130"/>
<dbReference type="EnsemblBacteria" id="CAB14130">
    <property type="protein sequence ID" value="CAB14130"/>
    <property type="gene ID" value="BSU_22130"/>
</dbReference>
<dbReference type="GeneID" id="939062"/>
<dbReference type="KEGG" id="bsu:BSU22130"/>
<dbReference type="PATRIC" id="fig|224308.179.peg.2417"/>
<dbReference type="eggNOG" id="COG3717">
    <property type="taxonomic scope" value="Bacteria"/>
</dbReference>
<dbReference type="InParanoid" id="P50843"/>
<dbReference type="OrthoDB" id="9770644at2"/>
<dbReference type="PhylomeDB" id="P50843"/>
<dbReference type="BioCyc" id="BSUB:BSU22130-MONOMER"/>
<dbReference type="UniPathway" id="UPA00545">
    <property type="reaction ID" value="UER00826"/>
</dbReference>
<dbReference type="Proteomes" id="UP000001570">
    <property type="component" value="Chromosome"/>
</dbReference>
<dbReference type="GO" id="GO:0008697">
    <property type="term" value="F:4-deoxy-L-threo-5-hexosulose-uronate ketol-isomerase activity"/>
    <property type="evidence" value="ECO:0000318"/>
    <property type="project" value="GO_Central"/>
</dbReference>
<dbReference type="GO" id="GO:0046872">
    <property type="term" value="F:metal ion binding"/>
    <property type="evidence" value="ECO:0000318"/>
    <property type="project" value="GO_Central"/>
</dbReference>
<dbReference type="GO" id="GO:0008270">
    <property type="term" value="F:zinc ion binding"/>
    <property type="evidence" value="ECO:0007669"/>
    <property type="project" value="UniProtKB-UniRule"/>
</dbReference>
<dbReference type="GO" id="GO:0019698">
    <property type="term" value="P:D-galacturonate catabolic process"/>
    <property type="evidence" value="ECO:0000318"/>
    <property type="project" value="GO_Central"/>
</dbReference>
<dbReference type="GO" id="GO:0042840">
    <property type="term" value="P:D-glucuronate catabolic process"/>
    <property type="evidence" value="ECO:0000318"/>
    <property type="project" value="GO_Central"/>
</dbReference>
<dbReference type="GO" id="GO:0045490">
    <property type="term" value="P:pectin catabolic process"/>
    <property type="evidence" value="ECO:0007669"/>
    <property type="project" value="UniProtKB-UniRule"/>
</dbReference>
<dbReference type="CDD" id="cd20491">
    <property type="entry name" value="cupin_KduI_C"/>
    <property type="match status" value="1"/>
</dbReference>
<dbReference type="CDD" id="cd20294">
    <property type="entry name" value="cupin_KduI_N"/>
    <property type="match status" value="1"/>
</dbReference>
<dbReference type="Gene3D" id="2.60.120.10">
    <property type="entry name" value="Jelly Rolls"/>
    <property type="match status" value="1"/>
</dbReference>
<dbReference type="Gene3D" id="2.60.120.520">
    <property type="entry name" value="pectin degrading enzyme 5-keto 4- deoxyuronate isomerase, domain 1"/>
    <property type="match status" value="1"/>
</dbReference>
<dbReference type="HAMAP" id="MF_00687">
    <property type="entry name" value="KduI"/>
    <property type="match status" value="1"/>
</dbReference>
<dbReference type="InterPro" id="IPR007045">
    <property type="entry name" value="KduI"/>
</dbReference>
<dbReference type="InterPro" id="IPR021120">
    <property type="entry name" value="KduI/IolB_isomerase"/>
</dbReference>
<dbReference type="InterPro" id="IPR027449">
    <property type="entry name" value="KduI_N"/>
</dbReference>
<dbReference type="InterPro" id="IPR014710">
    <property type="entry name" value="RmlC-like_jellyroll"/>
</dbReference>
<dbReference type="InterPro" id="IPR011051">
    <property type="entry name" value="RmlC_Cupin_sf"/>
</dbReference>
<dbReference type="NCBIfam" id="NF002091">
    <property type="entry name" value="PRK00924.1"/>
    <property type="match status" value="1"/>
</dbReference>
<dbReference type="PANTHER" id="PTHR38461">
    <property type="entry name" value="4-DEOXY-L-THREO-5-HEXOSULOSE-URONATE KETOL-ISOMERASE"/>
    <property type="match status" value="1"/>
</dbReference>
<dbReference type="PANTHER" id="PTHR38461:SF1">
    <property type="entry name" value="4-DEOXY-L-THREO-5-HEXOSULOSE-URONATE KETOL-ISOMERASE"/>
    <property type="match status" value="1"/>
</dbReference>
<dbReference type="Pfam" id="PF04962">
    <property type="entry name" value="KduI"/>
    <property type="match status" value="1"/>
</dbReference>
<dbReference type="PIRSF" id="PIRSF006625">
    <property type="entry name" value="KduI"/>
    <property type="match status" value="1"/>
</dbReference>
<dbReference type="SUPFAM" id="SSF51182">
    <property type="entry name" value="RmlC-like cupins"/>
    <property type="match status" value="1"/>
</dbReference>
<proteinExistence type="evidence at transcript level"/>
<accession>P50843</accession>